<dbReference type="EC" id="3.6.1.54" evidence="1"/>
<dbReference type="EMBL" id="CP000514">
    <property type="protein sequence ID" value="ABM18929.1"/>
    <property type="molecule type" value="Genomic_DNA"/>
</dbReference>
<dbReference type="RefSeq" id="WP_011785325.1">
    <property type="nucleotide sequence ID" value="NC_008740.1"/>
</dbReference>
<dbReference type="SMR" id="A1U1R0"/>
<dbReference type="STRING" id="351348.Maqu_1847"/>
<dbReference type="KEGG" id="maq:Maqu_1847"/>
<dbReference type="eggNOG" id="COG2908">
    <property type="taxonomic scope" value="Bacteria"/>
</dbReference>
<dbReference type="HOGENOM" id="CLU_074586_0_0_6"/>
<dbReference type="OrthoDB" id="9783283at2"/>
<dbReference type="UniPathway" id="UPA00359">
    <property type="reaction ID" value="UER00480"/>
</dbReference>
<dbReference type="Proteomes" id="UP000000998">
    <property type="component" value="Chromosome"/>
</dbReference>
<dbReference type="GO" id="GO:0005737">
    <property type="term" value="C:cytoplasm"/>
    <property type="evidence" value="ECO:0007669"/>
    <property type="project" value="InterPro"/>
</dbReference>
<dbReference type="GO" id="GO:0019897">
    <property type="term" value="C:extrinsic component of plasma membrane"/>
    <property type="evidence" value="ECO:0007669"/>
    <property type="project" value="UniProtKB-UniRule"/>
</dbReference>
<dbReference type="GO" id="GO:0030145">
    <property type="term" value="F:manganese ion binding"/>
    <property type="evidence" value="ECO:0007669"/>
    <property type="project" value="UniProtKB-UniRule"/>
</dbReference>
<dbReference type="GO" id="GO:0008758">
    <property type="term" value="F:UDP-2,3-diacylglucosamine hydrolase activity"/>
    <property type="evidence" value="ECO:0007669"/>
    <property type="project" value="UniProtKB-UniRule"/>
</dbReference>
<dbReference type="GO" id="GO:0009245">
    <property type="term" value="P:lipid A biosynthetic process"/>
    <property type="evidence" value="ECO:0007669"/>
    <property type="project" value="UniProtKB-UniRule"/>
</dbReference>
<dbReference type="CDD" id="cd07398">
    <property type="entry name" value="MPP_YbbF-LpxH"/>
    <property type="match status" value="1"/>
</dbReference>
<dbReference type="Gene3D" id="3.60.21.10">
    <property type="match status" value="1"/>
</dbReference>
<dbReference type="HAMAP" id="MF_00575">
    <property type="entry name" value="LpxH"/>
    <property type="match status" value="1"/>
</dbReference>
<dbReference type="InterPro" id="IPR004843">
    <property type="entry name" value="Calcineurin-like_PHP_ApaH"/>
</dbReference>
<dbReference type="InterPro" id="IPR043461">
    <property type="entry name" value="LpxH-like"/>
</dbReference>
<dbReference type="InterPro" id="IPR029052">
    <property type="entry name" value="Metallo-depent_PP-like"/>
</dbReference>
<dbReference type="InterPro" id="IPR010138">
    <property type="entry name" value="UDP-diacylglucosamine_Hdrlase"/>
</dbReference>
<dbReference type="NCBIfam" id="TIGR01854">
    <property type="entry name" value="lipid_A_lpxH"/>
    <property type="match status" value="1"/>
</dbReference>
<dbReference type="NCBIfam" id="NF003743">
    <property type="entry name" value="PRK05340.1"/>
    <property type="match status" value="1"/>
</dbReference>
<dbReference type="PANTHER" id="PTHR34990:SF1">
    <property type="entry name" value="UDP-2,3-DIACYLGLUCOSAMINE HYDROLASE"/>
    <property type="match status" value="1"/>
</dbReference>
<dbReference type="PANTHER" id="PTHR34990">
    <property type="entry name" value="UDP-2,3-DIACYLGLUCOSAMINE HYDROLASE-RELATED"/>
    <property type="match status" value="1"/>
</dbReference>
<dbReference type="Pfam" id="PF00149">
    <property type="entry name" value="Metallophos"/>
    <property type="match status" value="1"/>
</dbReference>
<dbReference type="SUPFAM" id="SSF56300">
    <property type="entry name" value="Metallo-dependent phosphatases"/>
    <property type="match status" value="1"/>
</dbReference>
<protein>
    <recommendedName>
        <fullName evidence="1">UDP-2,3-diacylglucosamine hydrolase</fullName>
        <ecNumber evidence="1">3.6.1.54</ecNumber>
    </recommendedName>
    <alternativeName>
        <fullName evidence="1">UDP-2,3-diacylglucosamine diphosphatase</fullName>
    </alternativeName>
</protein>
<gene>
    <name evidence="1" type="primary">lpxH</name>
    <name type="ordered locus">Maqu_1847</name>
</gene>
<keyword id="KW-0997">Cell inner membrane</keyword>
<keyword id="KW-1003">Cell membrane</keyword>
<keyword id="KW-0378">Hydrolase</keyword>
<keyword id="KW-0441">Lipid A biosynthesis</keyword>
<keyword id="KW-0444">Lipid biosynthesis</keyword>
<keyword id="KW-0443">Lipid metabolism</keyword>
<keyword id="KW-0464">Manganese</keyword>
<keyword id="KW-0472">Membrane</keyword>
<keyword id="KW-0479">Metal-binding</keyword>
<sequence>MTTLFISDLHLEESRPDITGAFLTFLRDKALGVERLYILGDFFEAWIGDDERTPLQEQVAAALREVRDTGTDIYLMHGNRDFLIGEDFCARAGAILLDDPTVVDLYGTPALLMHGDSLCTADVEYQKFRANMRNPQTVKMLLSRPLKDRQLMARQLREISMAKNQGKAETIMDVTPEEVVKELEAHNVQLMIHGHTHRPAIHELEANGRPARRIVLGDWDENVWWLEASKNQPVALRHQPLADF</sequence>
<evidence type="ECO:0000255" key="1">
    <source>
        <dbReference type="HAMAP-Rule" id="MF_00575"/>
    </source>
</evidence>
<feature type="chain" id="PRO_1000025062" description="UDP-2,3-diacylglucosamine hydrolase">
    <location>
        <begin position="1"/>
        <end position="244"/>
    </location>
</feature>
<feature type="binding site" evidence="1">
    <location>
        <position position="8"/>
    </location>
    <ligand>
        <name>Mn(2+)</name>
        <dbReference type="ChEBI" id="CHEBI:29035"/>
        <label>1</label>
    </ligand>
</feature>
<feature type="binding site" evidence="1">
    <location>
        <position position="10"/>
    </location>
    <ligand>
        <name>Mn(2+)</name>
        <dbReference type="ChEBI" id="CHEBI:29035"/>
        <label>1</label>
    </ligand>
</feature>
<feature type="binding site" evidence="1">
    <location>
        <position position="41"/>
    </location>
    <ligand>
        <name>Mn(2+)</name>
        <dbReference type="ChEBI" id="CHEBI:29035"/>
        <label>1</label>
    </ligand>
</feature>
<feature type="binding site" evidence="1">
    <location>
        <position position="41"/>
    </location>
    <ligand>
        <name>Mn(2+)</name>
        <dbReference type="ChEBI" id="CHEBI:29035"/>
        <label>2</label>
    </ligand>
</feature>
<feature type="binding site" evidence="1">
    <location>
        <begin position="79"/>
        <end position="80"/>
    </location>
    <ligand>
        <name>substrate</name>
    </ligand>
</feature>
<feature type="binding site" evidence="1">
    <location>
        <position position="79"/>
    </location>
    <ligand>
        <name>Mn(2+)</name>
        <dbReference type="ChEBI" id="CHEBI:29035"/>
        <label>2</label>
    </ligand>
</feature>
<feature type="binding site" evidence="1">
    <location>
        <position position="114"/>
    </location>
    <ligand>
        <name>Mn(2+)</name>
        <dbReference type="ChEBI" id="CHEBI:29035"/>
        <label>2</label>
    </ligand>
</feature>
<feature type="binding site" evidence="1">
    <location>
        <position position="122"/>
    </location>
    <ligand>
        <name>substrate</name>
    </ligand>
</feature>
<feature type="binding site" evidence="1">
    <location>
        <position position="160"/>
    </location>
    <ligand>
        <name>substrate</name>
    </ligand>
</feature>
<feature type="binding site" evidence="1">
    <location>
        <position position="164"/>
    </location>
    <ligand>
        <name>substrate</name>
    </ligand>
</feature>
<feature type="binding site" evidence="1">
    <location>
        <position position="167"/>
    </location>
    <ligand>
        <name>substrate</name>
    </ligand>
</feature>
<feature type="binding site" evidence="1">
    <location>
        <position position="195"/>
    </location>
    <ligand>
        <name>Mn(2+)</name>
        <dbReference type="ChEBI" id="CHEBI:29035"/>
        <label>2</label>
    </ligand>
</feature>
<feature type="binding site" evidence="1">
    <location>
        <position position="195"/>
    </location>
    <ligand>
        <name>substrate</name>
    </ligand>
</feature>
<feature type="binding site" evidence="1">
    <location>
        <position position="197"/>
    </location>
    <ligand>
        <name>Mn(2+)</name>
        <dbReference type="ChEBI" id="CHEBI:29035"/>
        <label>1</label>
    </ligand>
</feature>
<comment type="function">
    <text evidence="1">Hydrolyzes the pyrophosphate bond of UDP-2,3-diacylglucosamine to yield 2,3-diacylglucosamine 1-phosphate (lipid X) and UMP by catalyzing the attack of water at the alpha-P atom. Involved in the biosynthesis of lipid A, a phosphorylated glycolipid that anchors the lipopolysaccharide to the outer membrane of the cell.</text>
</comment>
<comment type="catalytic activity">
    <reaction evidence="1">
        <text>UDP-2-N,3-O-bis[(3R)-3-hydroxytetradecanoyl]-alpha-D-glucosamine + H2O = 2-N,3-O-bis[(3R)-3-hydroxytetradecanoyl]-alpha-D-glucosaminyl 1-phosphate + UMP + 2 H(+)</text>
        <dbReference type="Rhea" id="RHEA:25213"/>
        <dbReference type="ChEBI" id="CHEBI:15377"/>
        <dbReference type="ChEBI" id="CHEBI:15378"/>
        <dbReference type="ChEBI" id="CHEBI:57865"/>
        <dbReference type="ChEBI" id="CHEBI:57957"/>
        <dbReference type="ChEBI" id="CHEBI:78847"/>
        <dbReference type="EC" id="3.6.1.54"/>
    </reaction>
</comment>
<comment type="cofactor">
    <cofactor evidence="1">
        <name>Mn(2+)</name>
        <dbReference type="ChEBI" id="CHEBI:29035"/>
    </cofactor>
    <text evidence="1">Binds 2 Mn(2+) ions per subunit in a binuclear metal center.</text>
</comment>
<comment type="pathway">
    <text evidence="1">Glycolipid biosynthesis; lipid IV(A) biosynthesis; lipid IV(A) from (3R)-3-hydroxytetradecanoyl-[acyl-carrier-protein] and UDP-N-acetyl-alpha-D-glucosamine: step 4/6.</text>
</comment>
<comment type="subcellular location">
    <subcellularLocation>
        <location evidence="1">Cell inner membrane</location>
        <topology evidence="1">Peripheral membrane protein</topology>
        <orientation evidence="1">Cytoplasmic side</orientation>
    </subcellularLocation>
</comment>
<comment type="similarity">
    <text evidence="1">Belongs to the LpxH family.</text>
</comment>
<accession>A1U1R0</accession>
<organism>
    <name type="scientific">Marinobacter nauticus (strain ATCC 700491 / DSM 11845 / VT8)</name>
    <name type="common">Marinobacter aquaeolei</name>
    <dbReference type="NCBI Taxonomy" id="351348"/>
    <lineage>
        <taxon>Bacteria</taxon>
        <taxon>Pseudomonadati</taxon>
        <taxon>Pseudomonadota</taxon>
        <taxon>Gammaproteobacteria</taxon>
        <taxon>Pseudomonadales</taxon>
        <taxon>Marinobacteraceae</taxon>
        <taxon>Marinobacter</taxon>
    </lineage>
</organism>
<name>LPXH_MARN8</name>
<proteinExistence type="inferred from homology"/>
<reference key="1">
    <citation type="journal article" date="2011" name="Appl. Environ. Microbiol.">
        <title>Genomic potential of Marinobacter aquaeolei, a biogeochemical 'opportunitroph'.</title>
        <authorList>
            <person name="Singer E."/>
            <person name="Webb E.A."/>
            <person name="Nelson W.C."/>
            <person name="Heidelberg J.F."/>
            <person name="Ivanova N."/>
            <person name="Pati A."/>
            <person name="Edwards K.J."/>
        </authorList>
    </citation>
    <scope>NUCLEOTIDE SEQUENCE [LARGE SCALE GENOMIC DNA]</scope>
    <source>
        <strain>ATCC 700491 / DSM 11845 / VT8</strain>
    </source>
</reference>